<dbReference type="EMBL" id="AABR03100673">
    <property type="status" value="NOT_ANNOTATED_CDS"/>
    <property type="molecule type" value="Genomic_DNA"/>
</dbReference>
<dbReference type="EMBL" id="AABR03103040">
    <property type="status" value="NOT_ANNOTATED_CDS"/>
    <property type="molecule type" value="Genomic_DNA"/>
</dbReference>
<dbReference type="EMBL" id="AABR03103985">
    <property type="status" value="NOT_ANNOTATED_CDS"/>
    <property type="molecule type" value="Genomic_DNA"/>
</dbReference>
<dbReference type="SMR" id="P0C0A2"/>
<dbReference type="FunCoup" id="P0C0A2">
    <property type="interactions" value="3063"/>
</dbReference>
<dbReference type="IntAct" id="P0C0A2">
    <property type="interactions" value="2"/>
</dbReference>
<dbReference type="STRING" id="10116.ENSRNOP00000016995"/>
<dbReference type="PhosphoSitePlus" id="P0C0A2"/>
<dbReference type="jPOST" id="P0C0A2"/>
<dbReference type="PaxDb" id="10116-ENSRNOP00000016995"/>
<dbReference type="AGR" id="RGD:1309754"/>
<dbReference type="RGD" id="1309754">
    <property type="gene designation" value="Vps36"/>
</dbReference>
<dbReference type="eggNOG" id="KOG2760">
    <property type="taxonomic scope" value="Eukaryota"/>
</dbReference>
<dbReference type="InParanoid" id="P0C0A2"/>
<dbReference type="PhylomeDB" id="P0C0A2"/>
<dbReference type="Reactome" id="R-RNO-917729">
    <property type="pathway name" value="Endosomal Sorting Complex Required For Transport (ESCRT)"/>
</dbReference>
<dbReference type="PRO" id="PR:P0C0A2"/>
<dbReference type="Proteomes" id="UP000002494">
    <property type="component" value="Unplaced"/>
</dbReference>
<dbReference type="GO" id="GO:0005829">
    <property type="term" value="C:cytosol"/>
    <property type="evidence" value="ECO:0000266"/>
    <property type="project" value="RGD"/>
</dbReference>
<dbReference type="GO" id="GO:0005768">
    <property type="term" value="C:endosome"/>
    <property type="evidence" value="ECO:0000250"/>
    <property type="project" value="UniProtKB"/>
</dbReference>
<dbReference type="GO" id="GO:0000814">
    <property type="term" value="C:ESCRT II complex"/>
    <property type="evidence" value="ECO:0000266"/>
    <property type="project" value="RGD"/>
</dbReference>
<dbReference type="GO" id="GO:0005770">
    <property type="term" value="C:late endosome"/>
    <property type="evidence" value="ECO:0000266"/>
    <property type="project" value="RGD"/>
</dbReference>
<dbReference type="GO" id="GO:0031902">
    <property type="term" value="C:late endosome membrane"/>
    <property type="evidence" value="ECO:0000266"/>
    <property type="project" value="RGD"/>
</dbReference>
<dbReference type="GO" id="GO:0005764">
    <property type="term" value="C:lysosome"/>
    <property type="evidence" value="ECO:0000266"/>
    <property type="project" value="RGD"/>
</dbReference>
<dbReference type="GO" id="GO:0005634">
    <property type="term" value="C:nucleus"/>
    <property type="evidence" value="ECO:0007669"/>
    <property type="project" value="UniProtKB-SubCell"/>
</dbReference>
<dbReference type="GO" id="GO:0032266">
    <property type="term" value="F:phosphatidylinositol-3-phosphate binding"/>
    <property type="evidence" value="ECO:0007669"/>
    <property type="project" value="InterPro"/>
</dbReference>
<dbReference type="GO" id="GO:0043130">
    <property type="term" value="F:ubiquitin binding"/>
    <property type="evidence" value="ECO:0000266"/>
    <property type="project" value="RGD"/>
</dbReference>
<dbReference type="GO" id="GO:0043328">
    <property type="term" value="P:protein transport to vacuole involved in ubiquitin-dependent protein catabolic process via the multivesicular body sorting pathway"/>
    <property type="evidence" value="ECO:0000318"/>
    <property type="project" value="GO_Central"/>
</dbReference>
<dbReference type="CDD" id="cd13226">
    <property type="entry name" value="PH-GRAM-like_Eap45"/>
    <property type="match status" value="1"/>
</dbReference>
<dbReference type="FunFam" id="1.10.10.10:FF:000203">
    <property type="entry name" value="Vacuolar protein sorting 36 homolog"/>
    <property type="match status" value="1"/>
</dbReference>
<dbReference type="FunFam" id="2.30.29.30:FF:000241">
    <property type="entry name" value="Vacuolar protein sorting 36 homolog"/>
    <property type="match status" value="1"/>
</dbReference>
<dbReference type="FunFam" id="1.10.10.10:FF:000170">
    <property type="entry name" value="Vacuolar protein-sorting-associated protein 36"/>
    <property type="match status" value="1"/>
</dbReference>
<dbReference type="Gene3D" id="6.10.140.260">
    <property type="match status" value="1"/>
</dbReference>
<dbReference type="Gene3D" id="2.30.29.30">
    <property type="entry name" value="Pleckstrin-homology domain (PH domain)/Phosphotyrosine-binding domain (PTB)"/>
    <property type="match status" value="1"/>
</dbReference>
<dbReference type="Gene3D" id="1.10.10.10">
    <property type="entry name" value="Winged helix-like DNA-binding domain superfamily/Winged helix DNA-binding domain"/>
    <property type="match status" value="2"/>
</dbReference>
<dbReference type="InterPro" id="IPR021648">
    <property type="entry name" value="GLUE_dom"/>
</dbReference>
<dbReference type="InterPro" id="IPR011993">
    <property type="entry name" value="PH-like_dom_sf"/>
</dbReference>
<dbReference type="InterPro" id="IPR040608">
    <property type="entry name" value="Snf8/Vps36"/>
</dbReference>
<dbReference type="InterPro" id="IPR037855">
    <property type="entry name" value="Vps36"/>
</dbReference>
<dbReference type="InterPro" id="IPR036388">
    <property type="entry name" value="WH-like_DNA-bd_sf"/>
</dbReference>
<dbReference type="InterPro" id="IPR036390">
    <property type="entry name" value="WH_DNA-bd_sf"/>
</dbReference>
<dbReference type="PANTHER" id="PTHR13128">
    <property type="entry name" value="VACUOLAR PROTEIN-SORTING-ASSOCIATED PROTEIN 36"/>
    <property type="match status" value="1"/>
</dbReference>
<dbReference type="PANTHER" id="PTHR13128:SF12">
    <property type="entry name" value="VACUOLAR PROTEIN-SORTING-ASSOCIATED PROTEIN 36"/>
    <property type="match status" value="1"/>
</dbReference>
<dbReference type="Pfam" id="PF04157">
    <property type="entry name" value="EAP30"/>
    <property type="match status" value="1"/>
</dbReference>
<dbReference type="Pfam" id="PF11605">
    <property type="entry name" value="Vps36_ESCRT-II"/>
    <property type="match status" value="1"/>
</dbReference>
<dbReference type="SUPFAM" id="SSF50729">
    <property type="entry name" value="PH domain-like"/>
    <property type="match status" value="1"/>
</dbReference>
<dbReference type="SUPFAM" id="SSF46785">
    <property type="entry name" value="Winged helix' DNA-binding domain"/>
    <property type="match status" value="2"/>
</dbReference>
<dbReference type="PROSITE" id="PS51495">
    <property type="entry name" value="GLUE"/>
    <property type="match status" value="1"/>
</dbReference>
<proteinExistence type="evidence at protein level"/>
<protein>
    <recommendedName>
        <fullName>Vacuolar protein-sorting-associated protein 36</fullName>
    </recommendedName>
    <alternativeName>
        <fullName>ELL-associated protein of 45 kDa</fullName>
    </alternativeName>
    <alternativeName>
        <fullName>ESCRT-II complex subunit VPS36</fullName>
    </alternativeName>
</protein>
<organism>
    <name type="scientific">Rattus norvegicus</name>
    <name type="common">Rat</name>
    <dbReference type="NCBI Taxonomy" id="10116"/>
    <lineage>
        <taxon>Eukaryota</taxon>
        <taxon>Metazoa</taxon>
        <taxon>Chordata</taxon>
        <taxon>Craniata</taxon>
        <taxon>Vertebrata</taxon>
        <taxon>Euteleostomi</taxon>
        <taxon>Mammalia</taxon>
        <taxon>Eutheria</taxon>
        <taxon>Euarchontoglires</taxon>
        <taxon>Glires</taxon>
        <taxon>Rodentia</taxon>
        <taxon>Myomorpha</taxon>
        <taxon>Muroidea</taxon>
        <taxon>Muridae</taxon>
        <taxon>Murinae</taxon>
        <taxon>Rattus</taxon>
    </lineage>
</organism>
<comment type="function">
    <text evidence="2 3">Component of the ESCRT-II complex (endosomal sorting complex required for transport II), which is required for multivesicular body (MVB) formation and sorting of endosomal cargo proteins into MVBs. The MVB pathway mediates delivery of transmembrane proteins into the lumen of the lysosome for degradation. The ESCRT-II complex is probably involved in the recruitment of the ESCRT-III complex. Its ability to bind ubiquitin probably plays a role in endosomal sorting of ubiquitinated cargo proteins by ESCRT complexes. The ESCRT-II complex may also play a role in transcription regulation, possibly via its interaction with ELL. Binds phosphoinosides such as PtdIns(3,4,5)P3 (By similarity).</text>
</comment>
<comment type="subunit">
    <text evidence="2 3 6">Component of a complex at least composed of ELL, SNF8/EAP30, VPS25/EAP20 and VPS36/EAP45 (PubMed:11278625). Component of the endosomal sorting complex required for transport II (ESCRT-II), composed of SNF8, VPS36 and two copies of VPS25 (By similarity). Interacts with VPS25, SNF8, TSG101 and CHMP6 (By similarity). Interacts (via GLUE domain) with ubiquitin (By similarity). Interacts with RILPL1 (via the C-terminal domain); which recruits ESCRT-II to the endosome membranes (By similarity). Interacts with ECPAS (By similarity).</text>
</comment>
<comment type="subcellular location">
    <subcellularLocation>
        <location>Cytoplasm</location>
    </subcellularLocation>
    <subcellularLocation>
        <location evidence="1">Endosome</location>
    </subcellularLocation>
    <subcellularLocation>
        <location evidence="3">Late endosome</location>
    </subcellularLocation>
    <subcellularLocation>
        <location evidence="1">Membrane</location>
    </subcellularLocation>
    <subcellularLocation>
        <location evidence="7">Nucleus</location>
    </subcellularLocation>
    <text evidence="3">Colocalizes with ubiquitinated proteins on late endosomes. Recruited to the endosome membrane to participate in vesicle formation.</text>
</comment>
<comment type="domain">
    <text evidence="3">The GLUE domain (GRAM-like ubiquitin-binding in EAP45) mediates binding to ubiquitin and phosphoinosides.</text>
</comment>
<comment type="similarity">
    <text evidence="7">Belongs to the VPS36 family.</text>
</comment>
<feature type="chain" id="PRO_0000215224" description="Vacuolar protein-sorting-associated protein 36">
    <location>
        <begin position="1"/>
        <end position="386"/>
    </location>
</feature>
<feature type="domain" description="GLUE N-terminal" evidence="5">
    <location>
        <begin position="1"/>
        <end position="88"/>
    </location>
</feature>
<feature type="domain" description="GLUE C-terminal" evidence="5">
    <location>
        <begin position="105"/>
        <end position="138"/>
    </location>
</feature>
<feature type="coiled-coil region" evidence="4">
    <location>
        <begin position="160"/>
        <end position="185"/>
    </location>
</feature>
<gene>
    <name type="primary">Vps36</name>
    <name type="synonym">Eap45</name>
</gene>
<name>VPS36_RAT</name>
<reference key="1">
    <citation type="journal article" date="2004" name="Nature">
        <title>Genome sequence of the Brown Norway rat yields insights into mammalian evolution.</title>
        <authorList>
            <person name="Gibbs R.A."/>
            <person name="Weinstock G.M."/>
            <person name="Metzker M.L."/>
            <person name="Muzny D.M."/>
            <person name="Sodergren E.J."/>
            <person name="Scherer S."/>
            <person name="Scott G."/>
            <person name="Steffen D."/>
            <person name="Worley K.C."/>
            <person name="Burch P.E."/>
            <person name="Okwuonu G."/>
            <person name="Hines S."/>
            <person name="Lewis L."/>
            <person name="Deramo C."/>
            <person name="Delgado O."/>
            <person name="Dugan-Rocha S."/>
            <person name="Miner G."/>
            <person name="Morgan M."/>
            <person name="Hawes A."/>
            <person name="Gill R."/>
            <person name="Holt R.A."/>
            <person name="Adams M.D."/>
            <person name="Amanatides P.G."/>
            <person name="Baden-Tillson H."/>
            <person name="Barnstead M."/>
            <person name="Chin S."/>
            <person name="Evans C.A."/>
            <person name="Ferriera S."/>
            <person name="Fosler C."/>
            <person name="Glodek A."/>
            <person name="Gu Z."/>
            <person name="Jennings D."/>
            <person name="Kraft C.L."/>
            <person name="Nguyen T."/>
            <person name="Pfannkoch C.M."/>
            <person name="Sitter C."/>
            <person name="Sutton G.G."/>
            <person name="Venter J.C."/>
            <person name="Woodage T."/>
            <person name="Smith D."/>
            <person name="Lee H.-M."/>
            <person name="Gustafson E."/>
            <person name="Cahill P."/>
            <person name="Kana A."/>
            <person name="Doucette-Stamm L."/>
            <person name="Weinstock K."/>
            <person name="Fechtel K."/>
            <person name="Weiss R.B."/>
            <person name="Dunn D.M."/>
            <person name="Green E.D."/>
            <person name="Blakesley R.W."/>
            <person name="Bouffard G.G."/>
            <person name="De Jong P.J."/>
            <person name="Osoegawa K."/>
            <person name="Zhu B."/>
            <person name="Marra M."/>
            <person name="Schein J."/>
            <person name="Bosdet I."/>
            <person name="Fjell C."/>
            <person name="Jones S."/>
            <person name="Krzywinski M."/>
            <person name="Mathewson C."/>
            <person name="Siddiqui A."/>
            <person name="Wye N."/>
            <person name="McPherson J."/>
            <person name="Zhao S."/>
            <person name="Fraser C.M."/>
            <person name="Shetty J."/>
            <person name="Shatsman S."/>
            <person name="Geer K."/>
            <person name="Chen Y."/>
            <person name="Abramzon S."/>
            <person name="Nierman W.C."/>
            <person name="Havlak P.H."/>
            <person name="Chen R."/>
            <person name="Durbin K.J."/>
            <person name="Egan A."/>
            <person name="Ren Y."/>
            <person name="Song X.-Z."/>
            <person name="Li B."/>
            <person name="Liu Y."/>
            <person name="Qin X."/>
            <person name="Cawley S."/>
            <person name="Cooney A.J."/>
            <person name="D'Souza L.M."/>
            <person name="Martin K."/>
            <person name="Wu J.Q."/>
            <person name="Gonzalez-Garay M.L."/>
            <person name="Jackson A.R."/>
            <person name="Kalafus K.J."/>
            <person name="McLeod M.P."/>
            <person name="Milosavljevic A."/>
            <person name="Virk D."/>
            <person name="Volkov A."/>
            <person name="Wheeler D.A."/>
            <person name="Zhang Z."/>
            <person name="Bailey J.A."/>
            <person name="Eichler E.E."/>
            <person name="Tuzun E."/>
            <person name="Birney E."/>
            <person name="Mongin E."/>
            <person name="Ureta-Vidal A."/>
            <person name="Woodwark C."/>
            <person name="Zdobnov E."/>
            <person name="Bork P."/>
            <person name="Suyama M."/>
            <person name="Torrents D."/>
            <person name="Alexandersson M."/>
            <person name="Trask B.J."/>
            <person name="Young J.M."/>
            <person name="Huang H."/>
            <person name="Wang H."/>
            <person name="Xing H."/>
            <person name="Daniels S."/>
            <person name="Gietzen D."/>
            <person name="Schmidt J."/>
            <person name="Stevens K."/>
            <person name="Vitt U."/>
            <person name="Wingrove J."/>
            <person name="Camara F."/>
            <person name="Mar Alba M."/>
            <person name="Abril J.F."/>
            <person name="Guigo R."/>
            <person name="Smit A."/>
            <person name="Dubchak I."/>
            <person name="Rubin E.M."/>
            <person name="Couronne O."/>
            <person name="Poliakov A."/>
            <person name="Huebner N."/>
            <person name="Ganten D."/>
            <person name="Goesele C."/>
            <person name="Hummel O."/>
            <person name="Kreitler T."/>
            <person name="Lee Y.-A."/>
            <person name="Monti J."/>
            <person name="Schulz H."/>
            <person name="Zimdahl H."/>
            <person name="Himmelbauer H."/>
            <person name="Lehrach H."/>
            <person name="Jacob H.J."/>
            <person name="Bromberg S."/>
            <person name="Gullings-Handley J."/>
            <person name="Jensen-Seaman M.I."/>
            <person name="Kwitek A.E."/>
            <person name="Lazar J."/>
            <person name="Pasko D."/>
            <person name="Tonellato P.J."/>
            <person name="Twigger S."/>
            <person name="Ponting C.P."/>
            <person name="Duarte J.M."/>
            <person name="Rice S."/>
            <person name="Goodstadt L."/>
            <person name="Beatson S.A."/>
            <person name="Emes R.D."/>
            <person name="Winter E.E."/>
            <person name="Webber C."/>
            <person name="Brandt P."/>
            <person name="Nyakatura G."/>
            <person name="Adetobi M."/>
            <person name="Chiaromonte F."/>
            <person name="Elnitski L."/>
            <person name="Eswara P."/>
            <person name="Hardison R.C."/>
            <person name="Hou M."/>
            <person name="Kolbe D."/>
            <person name="Makova K."/>
            <person name="Miller W."/>
            <person name="Nekrutenko A."/>
            <person name="Riemer C."/>
            <person name="Schwartz S."/>
            <person name="Taylor J."/>
            <person name="Yang S."/>
            <person name="Zhang Y."/>
            <person name="Lindpaintner K."/>
            <person name="Andrews T.D."/>
            <person name="Caccamo M."/>
            <person name="Clamp M."/>
            <person name="Clarke L."/>
            <person name="Curwen V."/>
            <person name="Durbin R.M."/>
            <person name="Eyras E."/>
            <person name="Searle S.M."/>
            <person name="Cooper G.M."/>
            <person name="Batzoglou S."/>
            <person name="Brudno M."/>
            <person name="Sidow A."/>
            <person name="Stone E.A."/>
            <person name="Payseur B.A."/>
            <person name="Bourque G."/>
            <person name="Lopez-Otin C."/>
            <person name="Puente X.S."/>
            <person name="Chakrabarti K."/>
            <person name="Chatterji S."/>
            <person name="Dewey C."/>
            <person name="Pachter L."/>
            <person name="Bray N."/>
            <person name="Yap V.B."/>
            <person name="Caspi A."/>
            <person name="Tesler G."/>
            <person name="Pevzner P.A."/>
            <person name="Haussler D."/>
            <person name="Roskin K.M."/>
            <person name="Baertsch R."/>
            <person name="Clawson H."/>
            <person name="Furey T.S."/>
            <person name="Hinrichs A.S."/>
            <person name="Karolchik D."/>
            <person name="Kent W.J."/>
            <person name="Rosenbloom K.R."/>
            <person name="Trumbower H."/>
            <person name="Weirauch M."/>
            <person name="Cooper D.N."/>
            <person name="Stenson P.D."/>
            <person name="Ma B."/>
            <person name="Brent M."/>
            <person name="Arumugam M."/>
            <person name="Shteynberg D."/>
            <person name="Copley R.R."/>
            <person name="Taylor M.S."/>
            <person name="Riethman H."/>
            <person name="Mudunuri U."/>
            <person name="Peterson J."/>
            <person name="Guyer M."/>
            <person name="Felsenfeld A."/>
            <person name="Old S."/>
            <person name="Mockrin S."/>
            <person name="Collins F.S."/>
        </authorList>
    </citation>
    <scope>NUCLEOTIDE SEQUENCE [LARGE SCALE GENOMIC DNA]</scope>
    <source>
        <strain>Brown Norway</strain>
    </source>
</reference>
<reference key="2">
    <citation type="journal article" date="2001" name="J. Biol. Chem.">
        <title>Cloning and characterization of ELL-associated proteins EAP45 and EAP20. a role for yeast EAP-like proteins in regulation of gene expression by glucose.</title>
        <authorList>
            <person name="Kamura T."/>
            <person name="Burian D."/>
            <person name="Khalili H."/>
            <person name="Schmidt S.L."/>
            <person name="Sato S."/>
            <person name="Liu W.-J."/>
            <person name="Conrad M.N."/>
            <person name="Conaway R.C."/>
            <person name="Conaway J.W."/>
            <person name="Shilatifard A."/>
        </authorList>
    </citation>
    <scope>PROTEIN SEQUENCE OF 35-46; 233-247 AND 357-362</scope>
    <scope>IDENTIFICATION IN A COMPLEX WITH ELL; VPS25 AND SNF8</scope>
</reference>
<evidence type="ECO:0000250" key="1"/>
<evidence type="ECO:0000250" key="2">
    <source>
        <dbReference type="UniProtKB" id="Q86VN1"/>
    </source>
</evidence>
<evidence type="ECO:0000250" key="3">
    <source>
        <dbReference type="UniProtKB" id="Q91XD6"/>
    </source>
</evidence>
<evidence type="ECO:0000255" key="4"/>
<evidence type="ECO:0000255" key="5">
    <source>
        <dbReference type="PROSITE-ProRule" id="PRU00828"/>
    </source>
</evidence>
<evidence type="ECO:0000269" key="6">
    <source>
    </source>
</evidence>
<evidence type="ECO:0000305" key="7"/>
<sequence length="386" mass="43718">MDRFVWTSGLLEINETLVIQQRGVRVYDGEEKIKFDAGTLLLSTHRLIWRDQKNNECCMAIPLSQIVFIEEQAAGIGKSAKIVVHLHPAPPNKEPGPFQSSKNSYIKLSFKEHGQIEFYRRLSEEMTQRRWETVPVSQSLQTKKGPQPGRIRAVGIVGIERKLEEKRKETDKNISEAFEDLSKLMIQAKEMVELSKSIANKIKEKQGDVTEDETIRFKSYLLSMGIANPVTRETYGSGTQYHMQLAKQLAGILQAPLEERGGIMSLTEVYCLVNRARGMELLSPEDLVNACKMLEGLKLPVRLRVFDSGVMVIELQTHKEEEMVASALETVSERGSLTSEEFAKLVGMSVLLAKERLLLAEKMGHLCRDDSVEGLRFYPNLFMTQN</sequence>
<accession>P0C0A2</accession>
<keyword id="KW-0175">Coiled coil</keyword>
<keyword id="KW-0963">Cytoplasm</keyword>
<keyword id="KW-0903">Direct protein sequencing</keyword>
<keyword id="KW-0967">Endosome</keyword>
<keyword id="KW-0446">Lipid-binding</keyword>
<keyword id="KW-0472">Membrane</keyword>
<keyword id="KW-0539">Nucleus</keyword>
<keyword id="KW-0653">Protein transport</keyword>
<keyword id="KW-1185">Reference proteome</keyword>
<keyword id="KW-0804">Transcription</keyword>
<keyword id="KW-0805">Transcription regulation</keyword>
<keyword id="KW-0813">Transport</keyword>